<reference key="1">
    <citation type="journal article" date="2007" name="Genome Biol.">
        <title>Characterization and modeling of the Haemophilus influenzae core and supragenomes based on the complete genomic sequences of Rd and 12 clinical nontypeable strains.</title>
        <authorList>
            <person name="Hogg J.S."/>
            <person name="Hu F.Z."/>
            <person name="Janto B."/>
            <person name="Boissy R."/>
            <person name="Hayes J."/>
            <person name="Keefe R."/>
            <person name="Post J.C."/>
            <person name="Ehrlich G.D."/>
        </authorList>
    </citation>
    <scope>NUCLEOTIDE SEQUENCE [LARGE SCALE GENOMIC DNA]</scope>
    <source>
        <strain>PittEE</strain>
    </source>
</reference>
<dbReference type="EMBL" id="CP000671">
    <property type="protein sequence ID" value="ABQ98763.1"/>
    <property type="molecule type" value="Genomic_DNA"/>
</dbReference>
<dbReference type="SMR" id="A5UDB2"/>
<dbReference type="KEGG" id="hip:CGSHiEE_07180"/>
<dbReference type="HOGENOM" id="CLU_186759_1_0_6"/>
<dbReference type="Gene3D" id="1.10.10.610">
    <property type="entry name" value="YehU-like"/>
    <property type="match status" value="1"/>
</dbReference>
<dbReference type="HAMAP" id="MF_00690">
    <property type="entry name" value="UPF0270"/>
    <property type="match status" value="1"/>
</dbReference>
<dbReference type="InterPro" id="IPR010648">
    <property type="entry name" value="UPF0270"/>
</dbReference>
<dbReference type="InterPro" id="IPR036685">
    <property type="entry name" value="YehU-like_sf"/>
</dbReference>
<dbReference type="NCBIfam" id="NF003438">
    <property type="entry name" value="PRK04966.1"/>
    <property type="match status" value="1"/>
</dbReference>
<dbReference type="Pfam" id="PF06794">
    <property type="entry name" value="UPF0270"/>
    <property type="match status" value="1"/>
</dbReference>
<dbReference type="PIRSF" id="PIRSF006169">
    <property type="entry name" value="UCP006169"/>
    <property type="match status" value="1"/>
</dbReference>
<dbReference type="SUPFAM" id="SSF118001">
    <property type="entry name" value="YehU-like"/>
    <property type="match status" value="1"/>
</dbReference>
<gene>
    <name type="ordered locus">CGSHiEE_07180</name>
</gene>
<accession>A5UDB2</accession>
<evidence type="ECO:0000255" key="1">
    <source>
        <dbReference type="HAMAP-Rule" id="MF_00690"/>
    </source>
</evidence>
<organism>
    <name type="scientific">Haemophilus influenzae (strain PittEE)</name>
    <dbReference type="NCBI Taxonomy" id="374930"/>
    <lineage>
        <taxon>Bacteria</taxon>
        <taxon>Pseudomonadati</taxon>
        <taxon>Pseudomonadota</taxon>
        <taxon>Gammaproteobacteria</taxon>
        <taxon>Pasteurellales</taxon>
        <taxon>Pasteurellaceae</taxon>
        <taxon>Haemophilus</taxon>
    </lineage>
</organism>
<sequence>MIIPWQELEAETLDNIVESVILREGTDYGIEELSLNQKKQLLLTQIRNGIALIVWSELHESIDIKNKTEFLKQECKEQECQMN</sequence>
<name>Y7180_HAEIE</name>
<protein>
    <recommendedName>
        <fullName evidence="1">UPF0270 protein CGSHiEE_07180</fullName>
    </recommendedName>
</protein>
<comment type="similarity">
    <text evidence="1">Belongs to the UPF0270 family.</text>
</comment>
<proteinExistence type="inferred from homology"/>
<feature type="chain" id="PRO_1000045164" description="UPF0270 protein CGSHiEE_07180">
    <location>
        <begin position="1"/>
        <end position="83"/>
    </location>
</feature>